<gene>
    <name type="ordered locus">GOX1710</name>
</gene>
<reference key="1">
    <citation type="journal article" date="2005" name="Nat. Biotechnol.">
        <title>Complete genome sequence of the acetic acid bacterium Gluconobacter oxydans.</title>
        <authorList>
            <person name="Prust C."/>
            <person name="Hoffmeister M."/>
            <person name="Liesegang H."/>
            <person name="Wiezer A."/>
            <person name="Fricke W.F."/>
            <person name="Ehrenreich A."/>
            <person name="Gottschalk G."/>
            <person name="Deppenmeier U."/>
        </authorList>
    </citation>
    <scope>NUCLEOTIDE SEQUENCE [LARGE SCALE GENOMIC DNA]</scope>
    <source>
        <strain>621H</strain>
    </source>
</reference>
<protein>
    <recommendedName>
        <fullName evidence="1">UPF0178 protein GOX1710</fullName>
    </recommendedName>
</protein>
<dbReference type="EMBL" id="CP000009">
    <property type="protein sequence ID" value="AAW61450.1"/>
    <property type="molecule type" value="Genomic_DNA"/>
</dbReference>
<dbReference type="RefSeq" id="WP_011253232.1">
    <property type="nucleotide sequence ID" value="NC_006677.1"/>
</dbReference>
<dbReference type="STRING" id="290633.GOX1710"/>
<dbReference type="KEGG" id="gox:GOX1710"/>
<dbReference type="eggNOG" id="COG1671">
    <property type="taxonomic scope" value="Bacteria"/>
</dbReference>
<dbReference type="HOGENOM" id="CLU_106619_2_1_5"/>
<dbReference type="Proteomes" id="UP000006375">
    <property type="component" value="Chromosome"/>
</dbReference>
<dbReference type="CDD" id="cd18720">
    <property type="entry name" value="PIN_YqxD-like"/>
    <property type="match status" value="1"/>
</dbReference>
<dbReference type="HAMAP" id="MF_00489">
    <property type="entry name" value="UPF0178"/>
    <property type="match status" value="1"/>
</dbReference>
<dbReference type="InterPro" id="IPR003791">
    <property type="entry name" value="UPF0178"/>
</dbReference>
<dbReference type="NCBIfam" id="NF001095">
    <property type="entry name" value="PRK00124.1"/>
    <property type="match status" value="1"/>
</dbReference>
<dbReference type="PANTHER" id="PTHR35146">
    <property type="entry name" value="UPF0178 PROTEIN YAII"/>
    <property type="match status" value="1"/>
</dbReference>
<dbReference type="PANTHER" id="PTHR35146:SF1">
    <property type="entry name" value="UPF0178 PROTEIN YAII"/>
    <property type="match status" value="1"/>
</dbReference>
<dbReference type="Pfam" id="PF02639">
    <property type="entry name" value="DUF188"/>
    <property type="match status" value="1"/>
</dbReference>
<sequence length="175" mass="19108">MAETTRLLVDADACPVKDEIYRVGARYGLKTVIVANSWMNIPQSPLIERVVVPEGPDVADDWIAEQATPADIVITNDVPLAVRCLAKQTSVLRPNGEEIDERSVGMVSAMRDLMQGLRETGAVTTYNPSFGKADRSRFLSALDTLIVRLRRKAALARTVPSSSQTIHRPVPGDVP</sequence>
<comment type="similarity">
    <text evidence="1">Belongs to the UPF0178 family.</text>
</comment>
<accession>Q5FQ96</accession>
<proteinExistence type="inferred from homology"/>
<name>Y1710_GLUOX</name>
<feature type="chain" id="PRO_0000175983" description="UPF0178 protein GOX1710">
    <location>
        <begin position="1"/>
        <end position="175"/>
    </location>
</feature>
<keyword id="KW-1185">Reference proteome</keyword>
<organism>
    <name type="scientific">Gluconobacter oxydans (strain 621H)</name>
    <name type="common">Gluconobacter suboxydans</name>
    <dbReference type="NCBI Taxonomy" id="290633"/>
    <lineage>
        <taxon>Bacteria</taxon>
        <taxon>Pseudomonadati</taxon>
        <taxon>Pseudomonadota</taxon>
        <taxon>Alphaproteobacteria</taxon>
        <taxon>Acetobacterales</taxon>
        <taxon>Acetobacteraceae</taxon>
        <taxon>Gluconobacter</taxon>
    </lineage>
</organism>
<evidence type="ECO:0000255" key="1">
    <source>
        <dbReference type="HAMAP-Rule" id="MF_00489"/>
    </source>
</evidence>